<keyword id="KW-1015">Disulfide bond</keyword>
<keyword id="KW-0382">Hypotensive agent</keyword>
<keyword id="KW-0964">Secreted</keyword>
<keyword id="KW-0732">Signal</keyword>
<keyword id="KW-0800">Toxin</keyword>
<keyword id="KW-0838">Vasoactive</keyword>
<keyword id="KW-0840">Vasodilator</keyword>
<sequence>MVGLSRLTGGGLLLVLALLPLALDGKPLEEAPTAPSRIIPFSRPVRKESQAVLDPMVHPERPAGSGDDGDLSRLEGLAKEALGDGCFGLKLDRIGTSSGLGCNPKRPDPAPTALARIIPFSRPVRKESRAALDRMQHPG</sequence>
<reference key="1">
    <citation type="submission" date="2005-07" db="EMBL/GenBank/DDBJ databases">
        <title>Characterization and sequence analyses of venom proteins of Micrurus f. fulvius (eastern coral snake) including a myoglobinuria-inducing phospholipase A2.</title>
        <authorList>
            <person name="Tsai I.-H."/>
            <person name="Tsai H.-Y."/>
            <person name="Chen H.-S."/>
            <person name="Wang Y.-M."/>
        </authorList>
    </citation>
    <scope>NUCLEOTIDE SEQUENCE [MRNA]</scope>
    <source>
        <strain>Subsp. fulvius</strain>
        <tissue>Venom gland</tissue>
    </source>
</reference>
<evidence type="ECO:0000250" key="1">
    <source>
        <dbReference type="UniProtKB" id="D9IX97"/>
    </source>
</evidence>
<evidence type="ECO:0000250" key="2">
    <source>
        <dbReference type="UniProtKB" id="P28374"/>
    </source>
</evidence>
<evidence type="ECO:0000255" key="3"/>
<evidence type="ECO:0000305" key="4"/>
<evidence type="ECO:0000305" key="5">
    <source ref="1"/>
</evidence>
<feature type="signal peptide" evidence="3">
    <location>
        <begin position="1"/>
        <end position="25"/>
    </location>
</feature>
<feature type="propeptide" id="PRO_0000403792" evidence="4">
    <location>
        <begin position="26"/>
        <end position="75"/>
    </location>
</feature>
<feature type="peptide" id="PRO_0000403793" description="Natriuretic peptide Mf-NP" evidence="1">
    <location>
        <begin position="76"/>
        <end position="116"/>
    </location>
</feature>
<feature type="propeptide" id="PRO_0000403794" evidence="4">
    <location>
        <begin position="117"/>
        <end position="139"/>
    </location>
</feature>
<feature type="disulfide bond" evidence="2">
    <location>
        <begin position="86"/>
        <end position="102"/>
    </location>
</feature>
<dbReference type="EMBL" id="DQ137797">
    <property type="protein sequence ID" value="AAZ39879.1"/>
    <property type="molecule type" value="mRNA"/>
</dbReference>
<dbReference type="GO" id="GO:0005576">
    <property type="term" value="C:extracellular region"/>
    <property type="evidence" value="ECO:0007669"/>
    <property type="project" value="UniProtKB-SubCell"/>
</dbReference>
<dbReference type="GO" id="GO:0005179">
    <property type="term" value="F:hormone activity"/>
    <property type="evidence" value="ECO:0007669"/>
    <property type="project" value="InterPro"/>
</dbReference>
<dbReference type="GO" id="GO:0090729">
    <property type="term" value="F:toxin activity"/>
    <property type="evidence" value="ECO:0007669"/>
    <property type="project" value="UniProtKB-KW"/>
</dbReference>
<dbReference type="GO" id="GO:0008217">
    <property type="term" value="P:regulation of blood pressure"/>
    <property type="evidence" value="ECO:0007669"/>
    <property type="project" value="UniProtKB-KW"/>
</dbReference>
<dbReference type="GO" id="GO:0042311">
    <property type="term" value="P:vasodilation"/>
    <property type="evidence" value="ECO:0007669"/>
    <property type="project" value="UniProtKB-KW"/>
</dbReference>
<dbReference type="InterPro" id="IPR002406">
    <property type="entry name" value="C_natriurtcpep"/>
</dbReference>
<dbReference type="InterPro" id="IPR000663">
    <property type="entry name" value="Natr_peptide"/>
</dbReference>
<dbReference type="InterPro" id="IPR030480">
    <property type="entry name" value="Natr_peptide_CS"/>
</dbReference>
<dbReference type="Pfam" id="PF00212">
    <property type="entry name" value="ANP"/>
    <property type="match status" value="1"/>
</dbReference>
<dbReference type="PRINTS" id="PR00713">
    <property type="entry name" value="CNATPEPTIDE"/>
</dbReference>
<dbReference type="SMART" id="SM00183">
    <property type="entry name" value="NAT_PEP"/>
    <property type="match status" value="1"/>
</dbReference>
<dbReference type="PROSITE" id="PS00263">
    <property type="entry name" value="NATRIURETIC_PEPTIDE"/>
    <property type="match status" value="1"/>
</dbReference>
<accession>B8K1V9</accession>
<name>VNP_MICFL</name>
<organism>
    <name type="scientific">Micrurus fulvius</name>
    <name type="common">Eastern coral snake</name>
    <name type="synonym">Coluber fulvius</name>
    <dbReference type="NCBI Taxonomy" id="8637"/>
    <lineage>
        <taxon>Eukaryota</taxon>
        <taxon>Metazoa</taxon>
        <taxon>Chordata</taxon>
        <taxon>Craniata</taxon>
        <taxon>Vertebrata</taxon>
        <taxon>Euteleostomi</taxon>
        <taxon>Lepidosauria</taxon>
        <taxon>Squamata</taxon>
        <taxon>Bifurcata</taxon>
        <taxon>Unidentata</taxon>
        <taxon>Episquamata</taxon>
        <taxon>Toxicofera</taxon>
        <taxon>Serpentes</taxon>
        <taxon>Colubroidea</taxon>
        <taxon>Elapidae</taxon>
        <taxon>Elapinae</taxon>
        <taxon>Micrurus</taxon>
    </lineage>
</organism>
<comment type="function">
    <text evidence="1">Natriuretic peptide that dose-dependently induces the rapid relaxation of rat aortic strips phenylephrine-precontracted. Acts by stimulating cGMP production in a dose-dependent manner (by probably activating NPR1 and/or NPR2). May also show potent hypotensive effects.</text>
</comment>
<comment type="subcellular location">
    <subcellularLocation>
        <location evidence="5">Secreted</location>
    </subcellularLocation>
</comment>
<comment type="tissue specificity">
    <text evidence="5">Expressed by the venom gland.</text>
</comment>
<comment type="similarity">
    <text evidence="4">Belongs to the natriuretic peptide family.</text>
</comment>
<proteinExistence type="evidence at transcript level"/>
<protein>
    <recommendedName>
        <fullName evidence="4">Natriuretic peptide Mf-NP</fullName>
    </recommendedName>
</protein>